<organism>
    <name type="scientific">Phaeosphaeria nodorum (strain SN15 / ATCC MYA-4574 / FGSC 10173)</name>
    <name type="common">Glume blotch fungus</name>
    <name type="synonym">Parastagonospora nodorum</name>
    <dbReference type="NCBI Taxonomy" id="321614"/>
    <lineage>
        <taxon>Eukaryota</taxon>
        <taxon>Fungi</taxon>
        <taxon>Dikarya</taxon>
        <taxon>Ascomycota</taxon>
        <taxon>Pezizomycotina</taxon>
        <taxon>Dothideomycetes</taxon>
        <taxon>Pleosporomycetidae</taxon>
        <taxon>Pleosporales</taxon>
        <taxon>Pleosporineae</taxon>
        <taxon>Phaeosphaeriaceae</taxon>
        <taxon>Parastagonospora</taxon>
    </lineage>
</organism>
<gene>
    <name type="primary">DML1</name>
    <name type="ORF">SNOG_01910</name>
</gene>
<sequence>MREIVTLQFGERSNYLGTHFWNTQESYFTYPPEAESPVNHDILFRPGIAPDGSDTFTPRALIYDLKGAFGSMRKINALYEPEDDRSILDQPGVWPSKPIVQRTQPIPPSTYQEHLDNGLDPPALNISSVRYWSDYSRVFYHPKSIAQLSEFDVNDTLMPFEKWEVGKGLFEKLEREVDLVDRDLRPFVEECDGIQGLQIFTGVDDAWGGWASGWIERLRDEYGKMSIWTWGLGDQGANAAVGRERRLQQMVNASQSLQTLGEQSSVYIPISNSPTKTPSYLSLDATSLWHVGALQAIGLESMTISSRLRTSVGGRGNLQDLEDTINSTGKRRIGKFEMSIADPEVLSENYSKEMAQAEKTGSMTSRRTSEDDEELSSFDIDVFTRDYRAVSRSGKKEHVFGRAEVSRGDWNLTDDNEARDPHNRFNQGPTLQRYTAPILFPLLDSYPTSIFDVGSGLGTKLAVHAGLTTSTAVAGQIRAVEQIVKRLVGIEEREALCNGLQVLAEEYDEGWDSGTDSDDDG</sequence>
<evidence type="ECO:0000250" key="1"/>
<evidence type="ECO:0000305" key="2"/>
<proteinExistence type="inferred from homology"/>
<accession>Q0V254</accession>
<keyword id="KW-0496">Mitochondrion</keyword>
<feature type="chain" id="PRO_0000285339" description="Protein DML1">
    <location>
        <begin position="1"/>
        <end position="521"/>
    </location>
</feature>
<comment type="function">
    <text evidence="1">Involved in the partitioning of the mitochondrial organelle and mitochondrial DNA (mtDNA) inheritance.</text>
</comment>
<comment type="subcellular location">
    <subcellularLocation>
        <location evidence="1">Mitochondrion</location>
    </subcellularLocation>
</comment>
<comment type="similarity">
    <text evidence="2">Belongs to the misato family.</text>
</comment>
<comment type="sequence caution" evidence="2">
    <conflict type="erroneous gene model prediction">
        <sequence resource="EMBL-CDS" id="EAT90122"/>
    </conflict>
</comment>
<protein>
    <recommendedName>
        <fullName>Protein DML1</fullName>
    </recommendedName>
</protein>
<dbReference type="EMBL" id="CH445327">
    <property type="protein sequence ID" value="EAT90122.2"/>
    <property type="status" value="ALT_SEQ"/>
    <property type="molecule type" value="Genomic_DNA"/>
</dbReference>
<dbReference type="RefSeq" id="XP_001792534.1">
    <property type="nucleotide sequence ID" value="XM_001792482.1"/>
</dbReference>
<dbReference type="FunCoup" id="Q0V254">
    <property type="interactions" value="70"/>
</dbReference>
<dbReference type="STRING" id="321614.Q0V254"/>
<dbReference type="GeneID" id="5969384"/>
<dbReference type="KEGG" id="pno:SNOG_01910"/>
<dbReference type="VEuPathDB" id="FungiDB:JI435_019100"/>
<dbReference type="eggNOG" id="KOG2530">
    <property type="taxonomic scope" value="Eukaryota"/>
</dbReference>
<dbReference type="InParanoid" id="Q0V254"/>
<dbReference type="OrthoDB" id="271881at2759"/>
<dbReference type="Proteomes" id="UP000001055">
    <property type="component" value="Unassembled WGS sequence"/>
</dbReference>
<dbReference type="GO" id="GO:0005737">
    <property type="term" value="C:cytoplasm"/>
    <property type="evidence" value="ECO:0000318"/>
    <property type="project" value="GO_Central"/>
</dbReference>
<dbReference type="GO" id="GO:0005739">
    <property type="term" value="C:mitochondrion"/>
    <property type="evidence" value="ECO:0000318"/>
    <property type="project" value="GO_Central"/>
</dbReference>
<dbReference type="GO" id="GO:0007005">
    <property type="term" value="P:mitochondrion organization"/>
    <property type="evidence" value="ECO:0000318"/>
    <property type="project" value="GO_Central"/>
</dbReference>
<dbReference type="Gene3D" id="3.40.50.1440">
    <property type="entry name" value="Tubulin/FtsZ, GTPase domain"/>
    <property type="match status" value="1"/>
</dbReference>
<dbReference type="InterPro" id="IPR013838">
    <property type="entry name" value="Beta-tubulin_BS"/>
</dbReference>
<dbReference type="InterPro" id="IPR049942">
    <property type="entry name" value="DML1/Misato"/>
</dbReference>
<dbReference type="InterPro" id="IPR029209">
    <property type="entry name" value="DML1/Misato_tubulin"/>
</dbReference>
<dbReference type="InterPro" id="IPR019605">
    <property type="entry name" value="Misato_II_tubulin-like"/>
</dbReference>
<dbReference type="InterPro" id="IPR036525">
    <property type="entry name" value="Tubulin/FtsZ_GTPase_sf"/>
</dbReference>
<dbReference type="PANTHER" id="PTHR13391">
    <property type="entry name" value="MITOCHONDRIAL DISTRIBUTION REGULATOR MISATO"/>
    <property type="match status" value="1"/>
</dbReference>
<dbReference type="PANTHER" id="PTHR13391:SF0">
    <property type="entry name" value="PROTEIN MISATO HOMOLOG 1"/>
    <property type="match status" value="1"/>
</dbReference>
<dbReference type="Pfam" id="PF10644">
    <property type="entry name" value="Misat_Tub_SegII"/>
    <property type="match status" value="1"/>
</dbReference>
<dbReference type="Pfam" id="PF14881">
    <property type="entry name" value="Tubulin_3"/>
    <property type="match status" value="1"/>
</dbReference>
<dbReference type="SUPFAM" id="SSF52490">
    <property type="entry name" value="Tubulin nucleotide-binding domain-like"/>
    <property type="match status" value="1"/>
</dbReference>
<name>DML1_PHANO</name>
<reference key="1">
    <citation type="journal article" date="2007" name="Plant Cell">
        <title>Dothideomycete-plant interactions illuminated by genome sequencing and EST analysis of the wheat pathogen Stagonospora nodorum.</title>
        <authorList>
            <person name="Hane J.K."/>
            <person name="Lowe R.G.T."/>
            <person name="Solomon P.S."/>
            <person name="Tan K.-C."/>
            <person name="Schoch C.L."/>
            <person name="Spatafora J.W."/>
            <person name="Crous P.W."/>
            <person name="Kodira C.D."/>
            <person name="Birren B.W."/>
            <person name="Galagan J.E."/>
            <person name="Torriani S.F.F."/>
            <person name="McDonald B.A."/>
            <person name="Oliver R.P."/>
        </authorList>
    </citation>
    <scope>NUCLEOTIDE SEQUENCE [LARGE SCALE GENOMIC DNA]</scope>
    <source>
        <strain>SN15 / ATCC MYA-4574 / FGSC 10173</strain>
    </source>
</reference>